<name>MVK_ARCFU</name>
<sequence>MIASAPGKIILFGEHAVVYGRHAVVSAINLRCRVSVRKSDRFLIRSSLGESGLDYQRHPYVVQAVKRFGELRNIPGAEIEIESEIPIGSGLGSSAAVIVATIAALNAEFDGDMDKEAIFQMAKQVEIDVQGRASGIDPFISTFGGSWLFPERRKVEMPFKFFVINFGSRSTAEMVAKVAELRERHPEVVDKIFDAIDAISLEASDVGSAERLEELIAINQSLLRAIGVSNPEIDRTIAELERMGLNAKITGAGGGGCIFGLFKGEKPKGSFIVEPEKEGVRIEE</sequence>
<dbReference type="EC" id="2.7.1.36" evidence="1"/>
<dbReference type="EMBL" id="AE000782">
    <property type="protein sequence ID" value="AAB88965.1"/>
    <property type="molecule type" value="Genomic_DNA"/>
</dbReference>
<dbReference type="PIR" id="A69536">
    <property type="entry name" value="A69536"/>
</dbReference>
<dbReference type="RefSeq" id="WP_010879778.1">
    <property type="nucleotide sequence ID" value="NC_000917.1"/>
</dbReference>
<dbReference type="SMR" id="O27995"/>
<dbReference type="STRING" id="224325.AF_2289"/>
<dbReference type="PaxDb" id="224325-AF_2289"/>
<dbReference type="EnsemblBacteria" id="AAB88965">
    <property type="protein sequence ID" value="AAB88965"/>
    <property type="gene ID" value="AF_2289"/>
</dbReference>
<dbReference type="GeneID" id="1485521"/>
<dbReference type="KEGG" id="afu:AF_2289"/>
<dbReference type="eggNOG" id="arCOG01028">
    <property type="taxonomic scope" value="Archaea"/>
</dbReference>
<dbReference type="HOGENOM" id="CLU_017814_0_0_2"/>
<dbReference type="OrthoDB" id="19001at2157"/>
<dbReference type="PhylomeDB" id="O27995"/>
<dbReference type="UniPathway" id="UPA00057">
    <property type="reaction ID" value="UER00098"/>
</dbReference>
<dbReference type="Proteomes" id="UP000002199">
    <property type="component" value="Chromosome"/>
</dbReference>
<dbReference type="GO" id="GO:0005829">
    <property type="term" value="C:cytosol"/>
    <property type="evidence" value="ECO:0007669"/>
    <property type="project" value="TreeGrafter"/>
</dbReference>
<dbReference type="GO" id="GO:0005524">
    <property type="term" value="F:ATP binding"/>
    <property type="evidence" value="ECO:0007669"/>
    <property type="project" value="UniProtKB-UniRule"/>
</dbReference>
<dbReference type="GO" id="GO:0000287">
    <property type="term" value="F:magnesium ion binding"/>
    <property type="evidence" value="ECO:0007669"/>
    <property type="project" value="UniProtKB-UniRule"/>
</dbReference>
<dbReference type="GO" id="GO:0004496">
    <property type="term" value="F:mevalonate kinase activity"/>
    <property type="evidence" value="ECO:0007669"/>
    <property type="project" value="UniProtKB-UniRule"/>
</dbReference>
<dbReference type="GO" id="GO:0019287">
    <property type="term" value="P:isopentenyl diphosphate biosynthetic process, mevalonate pathway"/>
    <property type="evidence" value="ECO:0007669"/>
    <property type="project" value="UniProtKB-UniRule"/>
</dbReference>
<dbReference type="Gene3D" id="3.30.230.10">
    <property type="match status" value="1"/>
</dbReference>
<dbReference type="Gene3D" id="3.30.70.890">
    <property type="entry name" value="GHMP kinase, C-terminal domain"/>
    <property type="match status" value="1"/>
</dbReference>
<dbReference type="HAMAP" id="MF_00217">
    <property type="entry name" value="Mevalonate_kinase"/>
    <property type="match status" value="1"/>
</dbReference>
<dbReference type="InterPro" id="IPR013750">
    <property type="entry name" value="GHMP_kinase_C_dom"/>
</dbReference>
<dbReference type="InterPro" id="IPR036554">
    <property type="entry name" value="GHMP_kinase_C_sf"/>
</dbReference>
<dbReference type="InterPro" id="IPR006204">
    <property type="entry name" value="GHMP_kinase_N_dom"/>
</dbReference>
<dbReference type="InterPro" id="IPR006203">
    <property type="entry name" value="GHMP_knse_ATP-bd_CS"/>
</dbReference>
<dbReference type="InterPro" id="IPR006205">
    <property type="entry name" value="Mev_gal_kin"/>
</dbReference>
<dbReference type="InterPro" id="IPR022937">
    <property type="entry name" value="Mevalonate_kinase_arc"/>
</dbReference>
<dbReference type="InterPro" id="IPR020568">
    <property type="entry name" value="Ribosomal_Su5_D2-typ_SF"/>
</dbReference>
<dbReference type="InterPro" id="IPR014721">
    <property type="entry name" value="Ribsml_uS5_D2-typ_fold_subgr"/>
</dbReference>
<dbReference type="NCBIfam" id="TIGR00549">
    <property type="entry name" value="mevalon_kin"/>
    <property type="match status" value="1"/>
</dbReference>
<dbReference type="PANTHER" id="PTHR43290">
    <property type="entry name" value="MEVALONATE KINASE"/>
    <property type="match status" value="1"/>
</dbReference>
<dbReference type="PANTHER" id="PTHR43290:SF2">
    <property type="entry name" value="MEVALONATE KINASE"/>
    <property type="match status" value="1"/>
</dbReference>
<dbReference type="Pfam" id="PF08544">
    <property type="entry name" value="GHMP_kinases_C"/>
    <property type="match status" value="1"/>
</dbReference>
<dbReference type="Pfam" id="PF00288">
    <property type="entry name" value="GHMP_kinases_N"/>
    <property type="match status" value="1"/>
</dbReference>
<dbReference type="PRINTS" id="PR00959">
    <property type="entry name" value="MEVGALKINASE"/>
</dbReference>
<dbReference type="SUPFAM" id="SSF55060">
    <property type="entry name" value="GHMP Kinase, C-terminal domain"/>
    <property type="match status" value="1"/>
</dbReference>
<dbReference type="SUPFAM" id="SSF54211">
    <property type="entry name" value="Ribosomal protein S5 domain 2-like"/>
    <property type="match status" value="1"/>
</dbReference>
<dbReference type="PROSITE" id="PS00627">
    <property type="entry name" value="GHMP_KINASES_ATP"/>
    <property type="match status" value="1"/>
</dbReference>
<proteinExistence type="inferred from homology"/>
<reference key="1">
    <citation type="journal article" date="1997" name="Nature">
        <title>The complete genome sequence of the hyperthermophilic, sulphate-reducing archaeon Archaeoglobus fulgidus.</title>
        <authorList>
            <person name="Klenk H.-P."/>
            <person name="Clayton R.A."/>
            <person name="Tomb J.-F."/>
            <person name="White O."/>
            <person name="Nelson K.E."/>
            <person name="Ketchum K.A."/>
            <person name="Dodson R.J."/>
            <person name="Gwinn M.L."/>
            <person name="Hickey E.K."/>
            <person name="Peterson J.D."/>
            <person name="Richardson D.L."/>
            <person name="Kerlavage A.R."/>
            <person name="Graham D.E."/>
            <person name="Kyrpides N.C."/>
            <person name="Fleischmann R.D."/>
            <person name="Quackenbush J."/>
            <person name="Lee N.H."/>
            <person name="Sutton G.G."/>
            <person name="Gill S.R."/>
            <person name="Kirkness E.F."/>
            <person name="Dougherty B.A."/>
            <person name="McKenney K."/>
            <person name="Adams M.D."/>
            <person name="Loftus B.J."/>
            <person name="Peterson S.N."/>
            <person name="Reich C.I."/>
            <person name="McNeil L.K."/>
            <person name="Badger J.H."/>
            <person name="Glodek A."/>
            <person name="Zhou L."/>
            <person name="Overbeek R."/>
            <person name="Gocayne J.D."/>
            <person name="Weidman J.F."/>
            <person name="McDonald L.A."/>
            <person name="Utterback T.R."/>
            <person name="Cotton M.D."/>
            <person name="Spriggs T."/>
            <person name="Artiach P."/>
            <person name="Kaine B.P."/>
            <person name="Sykes S.M."/>
            <person name="Sadow P.W."/>
            <person name="D'Andrea K.P."/>
            <person name="Bowman C."/>
            <person name="Fujii C."/>
            <person name="Garland S.A."/>
            <person name="Mason T.M."/>
            <person name="Olsen G.J."/>
            <person name="Fraser C.M."/>
            <person name="Smith H.O."/>
            <person name="Woese C.R."/>
            <person name="Venter J.C."/>
        </authorList>
    </citation>
    <scope>NUCLEOTIDE SEQUENCE [LARGE SCALE GENOMIC DNA]</scope>
    <source>
        <strain>ATCC 49558 / DSM 4304 / JCM 9628 / NBRC 100126 / VC-16</strain>
    </source>
</reference>
<organism>
    <name type="scientific">Archaeoglobus fulgidus (strain ATCC 49558 / DSM 4304 / JCM 9628 / NBRC 100126 / VC-16)</name>
    <dbReference type="NCBI Taxonomy" id="224325"/>
    <lineage>
        <taxon>Archaea</taxon>
        <taxon>Methanobacteriati</taxon>
        <taxon>Methanobacteriota</taxon>
        <taxon>Archaeoglobi</taxon>
        <taxon>Archaeoglobales</taxon>
        <taxon>Archaeoglobaceae</taxon>
        <taxon>Archaeoglobus</taxon>
    </lineage>
</organism>
<accession>O27995</accession>
<feature type="chain" id="PRO_0000156664" description="Mevalonate kinase">
    <location>
        <begin position="1"/>
        <end position="284"/>
    </location>
</feature>
<feature type="active site" description="Proton acceptor" evidence="1">
    <location>
        <position position="137"/>
    </location>
</feature>
<feature type="binding site" evidence="1">
    <location>
        <begin position="86"/>
        <end position="96"/>
    </location>
    <ligand>
        <name>ATP</name>
        <dbReference type="ChEBI" id="CHEBI:30616"/>
    </ligand>
</feature>
<gene>
    <name evidence="1" type="primary">mvk</name>
    <name type="ordered locus">AF_2289</name>
</gene>
<comment type="function">
    <text evidence="1">Catalyzes the phosphorylation of (R)-mevalonate (MVA) to (R)-mevalonate 5-phosphate (MVAP). Functions in the mevalonate (MVA) pathway leading to isopentenyl diphosphate (IPP), a key precursor for the biosynthesis of isoprenoid compounds such as archaeal membrane lipids.</text>
</comment>
<comment type="catalytic activity">
    <reaction evidence="1">
        <text>(R)-mevalonate + ATP = (R)-5-phosphomevalonate + ADP + H(+)</text>
        <dbReference type="Rhea" id="RHEA:17065"/>
        <dbReference type="ChEBI" id="CHEBI:15378"/>
        <dbReference type="ChEBI" id="CHEBI:30616"/>
        <dbReference type="ChEBI" id="CHEBI:36464"/>
        <dbReference type="ChEBI" id="CHEBI:58146"/>
        <dbReference type="ChEBI" id="CHEBI:456216"/>
        <dbReference type="EC" id="2.7.1.36"/>
    </reaction>
</comment>
<comment type="cofactor">
    <cofactor evidence="1">
        <name>Mg(2+)</name>
        <dbReference type="ChEBI" id="CHEBI:18420"/>
    </cofactor>
</comment>
<comment type="pathway">
    <text evidence="1">Isoprenoid biosynthesis; isopentenyl diphosphate biosynthesis via mevalonate pathway; isopentenyl diphosphate from (R)-mevalonate: step 1/3.</text>
</comment>
<comment type="subunit">
    <text evidence="1">Homodimer.</text>
</comment>
<comment type="subcellular location">
    <subcellularLocation>
        <location evidence="1">Cytoplasm</location>
    </subcellularLocation>
</comment>
<comment type="similarity">
    <text evidence="1">Belongs to the GHMP kinase family. Mevalonate kinase subfamily.</text>
</comment>
<keyword id="KW-0067">ATP-binding</keyword>
<keyword id="KW-0963">Cytoplasm</keyword>
<keyword id="KW-0414">Isoprene biosynthesis</keyword>
<keyword id="KW-0418">Kinase</keyword>
<keyword id="KW-0444">Lipid biosynthesis</keyword>
<keyword id="KW-0443">Lipid metabolism</keyword>
<keyword id="KW-0460">Magnesium</keyword>
<keyword id="KW-0547">Nucleotide-binding</keyword>
<keyword id="KW-1185">Reference proteome</keyword>
<keyword id="KW-0808">Transferase</keyword>
<protein>
    <recommendedName>
        <fullName evidence="1">Mevalonate kinase</fullName>
        <shortName evidence="1">MK</shortName>
        <shortName evidence="1">MVK</shortName>
        <ecNumber evidence="1">2.7.1.36</ecNumber>
    </recommendedName>
</protein>
<evidence type="ECO:0000255" key="1">
    <source>
        <dbReference type="HAMAP-Rule" id="MF_00217"/>
    </source>
</evidence>